<proteinExistence type="inferred from homology"/>
<comment type="function">
    <text evidence="1">A low activity DNA endonuclease probably yielding 3'-hydroxyl ends. Involved in RecA-independent recombination and horizontal gene transfer (By similarity).</text>
</comment>
<comment type="similarity">
    <text evidence="2">Belongs to the Rpn/YhgA-like nuclease family.</text>
</comment>
<sequence length="313" mass="35321">MKKKNTTPTPHDATFRQFLTQPDIARDFMELHLPAELRAICDLSTLKLESGSFVEDDLRQYFSDVLYSLKTTAGDGYIHVLVEHQSTPDKHMAFRLIRYAVAAMQRHLEAGHKKLPLVIPVLFYTGKRSPYPYSTRWLDEFDDTALADKLYSSAFPLVDVTVIPDDEIAGHRSMAALTLLQKHIHQRDLAELVDRLAPILLAGYLSSSQVISLVHYIVQAGETSDAEAFVRELAQRVPQHGDALMTIAQQLEQKGIEKGIQLGEQRGIEKGRSEGEREATLKIARTMLQNCIDRNTVMKMTGLTEDDLAQIRH</sequence>
<feature type="chain" id="PRO_0000066528" description="Recombination-promoting nuclease pSLT051">
    <location>
        <begin position="1"/>
        <end position="313"/>
    </location>
</feature>
<keyword id="KW-0233">DNA recombination</keyword>
<keyword id="KW-0255">Endonuclease</keyword>
<keyword id="KW-0378">Hydrolase</keyword>
<keyword id="KW-0460">Magnesium</keyword>
<keyword id="KW-0540">Nuclease</keyword>
<keyword id="KW-0614">Plasmid</keyword>
<keyword id="KW-1185">Reference proteome</keyword>
<geneLocation type="plasmid">
    <name>pSLT</name>
</geneLocation>
<name>YTL2_SALTY</name>
<accession>P37415</accession>
<dbReference type="EC" id="3.1.21.-"/>
<dbReference type="EMBL" id="Z29513">
    <property type="protein sequence ID" value="CAA82634.1"/>
    <property type="molecule type" value="Genomic_DNA"/>
</dbReference>
<dbReference type="EMBL" id="AE006471">
    <property type="protein sequence ID" value="AAL23539.1"/>
    <property type="molecule type" value="Genomic_DNA"/>
</dbReference>
<dbReference type="PIR" id="S41385">
    <property type="entry name" value="S41385"/>
</dbReference>
<dbReference type="RefSeq" id="WP_000728917.1">
    <property type="nucleotide sequence ID" value="NC_003277.2"/>
</dbReference>
<dbReference type="RefSeq" id="YP_003264424.1">
    <property type="nucleotide sequence ID" value="NC_013437.1"/>
</dbReference>
<dbReference type="RefSeq" id="YP_003864201.1">
    <property type="nucleotide sequence ID" value="NC_014476.2"/>
</dbReference>
<dbReference type="RefSeq" id="YP_006955252.1">
    <property type="nucleotide sequence ID" value="NC_019108.1"/>
</dbReference>
<dbReference type="RefSeq" id="YP_006955392.1">
    <property type="nucleotide sequence ID" value="NC_019109.1"/>
</dbReference>
<dbReference type="RefSeq" id="YP_006955590.1">
    <property type="nucleotide sequence ID" value="NC_019001.1"/>
</dbReference>
<dbReference type="SMR" id="P37415"/>
<dbReference type="DNASU" id="1256185"/>
<dbReference type="KEGG" id="stm:PSLT051"/>
<dbReference type="PATRIC" id="fig|99287.12.peg.4908"/>
<dbReference type="HOGENOM" id="CLU_059548_1_0_6"/>
<dbReference type="OMA" id="EQMSGQQ"/>
<dbReference type="PhylomeDB" id="P37415"/>
<dbReference type="BioCyc" id="SENT99287:PSLT051-MONOMER"/>
<dbReference type="Proteomes" id="UP000001014">
    <property type="component" value="Plasmid pSLT"/>
</dbReference>
<dbReference type="GO" id="GO:1990238">
    <property type="term" value="F:double-stranded DNA endonuclease activity"/>
    <property type="evidence" value="ECO:0000318"/>
    <property type="project" value="GO_Central"/>
</dbReference>
<dbReference type="GO" id="GO:0006310">
    <property type="term" value="P:DNA recombination"/>
    <property type="evidence" value="ECO:0000318"/>
    <property type="project" value="GO_Central"/>
</dbReference>
<dbReference type="InterPro" id="IPR051699">
    <property type="entry name" value="Rpn/YhgA-like_nuclease"/>
</dbReference>
<dbReference type="InterPro" id="IPR010106">
    <property type="entry name" value="RpnA"/>
</dbReference>
<dbReference type="InterPro" id="IPR006842">
    <property type="entry name" value="Transposase_31"/>
</dbReference>
<dbReference type="NCBIfam" id="TIGR01784">
    <property type="entry name" value="T_den_put_tspse"/>
    <property type="match status" value="1"/>
</dbReference>
<dbReference type="PANTHER" id="PTHR34611">
    <property type="match status" value="1"/>
</dbReference>
<dbReference type="PANTHER" id="PTHR34611:SF4">
    <property type="entry name" value="RECOMBINATION-PROMOTING NUCLEASE PSLT051"/>
    <property type="match status" value="1"/>
</dbReference>
<dbReference type="Pfam" id="PF04754">
    <property type="entry name" value="Transposase_31"/>
    <property type="match status" value="1"/>
</dbReference>
<reference key="1">
    <citation type="submission" date="1994-01" db="EMBL/GenBank/DDBJ databases">
        <authorList>
            <person name="Taira S."/>
            <person name="Hurme R."/>
            <person name="Heiskanen P."/>
            <person name="Heikkila H."/>
            <person name="Rhen M."/>
        </authorList>
    </citation>
    <scope>NUCLEOTIDE SEQUENCE [GENOMIC DNA]</scope>
    <source>
        <strain>LT2</strain>
    </source>
</reference>
<reference key="2">
    <citation type="journal article" date="2001" name="Nature">
        <title>Complete genome sequence of Salmonella enterica serovar Typhimurium LT2.</title>
        <authorList>
            <person name="McClelland M."/>
            <person name="Sanderson K.E."/>
            <person name="Spieth J."/>
            <person name="Clifton S.W."/>
            <person name="Latreille P."/>
            <person name="Courtney L."/>
            <person name="Porwollik S."/>
            <person name="Ali J."/>
            <person name="Dante M."/>
            <person name="Du F."/>
            <person name="Hou S."/>
            <person name="Layman D."/>
            <person name="Leonard S."/>
            <person name="Nguyen C."/>
            <person name="Scott K."/>
            <person name="Holmes A."/>
            <person name="Grewal N."/>
            <person name="Mulvaney E."/>
            <person name="Ryan E."/>
            <person name="Sun H."/>
            <person name="Florea L."/>
            <person name="Miller W."/>
            <person name="Stoneking T."/>
            <person name="Nhan M."/>
            <person name="Waterston R."/>
            <person name="Wilson R.K."/>
        </authorList>
    </citation>
    <scope>NUCLEOTIDE SEQUENCE [LARGE SCALE GENOMIC DNA]</scope>
    <source>
        <strain>LT2 / SGSC1412 / ATCC 700720</strain>
    </source>
</reference>
<gene>
    <name type="ordered locus">PSLT051</name>
</gene>
<evidence type="ECO:0000250" key="1">
    <source>
        <dbReference type="UniProtKB" id="P77768"/>
    </source>
</evidence>
<evidence type="ECO:0000305" key="2"/>
<organism>
    <name type="scientific">Salmonella typhimurium (strain LT2 / SGSC1412 / ATCC 700720)</name>
    <dbReference type="NCBI Taxonomy" id="99287"/>
    <lineage>
        <taxon>Bacteria</taxon>
        <taxon>Pseudomonadati</taxon>
        <taxon>Pseudomonadota</taxon>
        <taxon>Gammaproteobacteria</taxon>
        <taxon>Enterobacterales</taxon>
        <taxon>Enterobacteriaceae</taxon>
        <taxon>Salmonella</taxon>
    </lineage>
</organism>
<protein>
    <recommendedName>
        <fullName evidence="1">Recombination-promoting nuclease pSLT051</fullName>
        <ecNumber>3.1.21.-</ecNumber>
    </recommendedName>
</protein>